<evidence type="ECO:0000250" key="1">
    <source>
        <dbReference type="UniProtKB" id="P31039"/>
    </source>
</evidence>
<evidence type="ECO:0000250" key="2">
    <source>
        <dbReference type="UniProtKB" id="P31040"/>
    </source>
</evidence>
<evidence type="ECO:0000250" key="3">
    <source>
        <dbReference type="UniProtKB" id="Q0QF01"/>
    </source>
</evidence>
<evidence type="ECO:0000250" key="4">
    <source>
        <dbReference type="UniProtKB" id="Q9YHT1"/>
    </source>
</evidence>
<evidence type="ECO:0000269" key="5">
    <source>
    </source>
</evidence>
<evidence type="ECO:0000305" key="6"/>
<evidence type="ECO:0007744" key="7">
    <source>
    </source>
</evidence>
<evidence type="ECO:0007744" key="8">
    <source>
    </source>
</evidence>
<proteinExistence type="evidence at protein level"/>
<name>SDHA_MOUSE</name>
<sequence>MAGVGAVSRLLRGRRLALTGAWPGTLQKQTCGFHFSVGENKKASAKVSDAISTQYPVVDHEFDAVVVGAGGAGLRAAFGLSEAGFNTACLTKLFPTRSHTVAAQGGINAALGNMEEDNWRWHFYDTVKGSDWLGDQDAIHYMTEQAPASVVELENYGMPFSRTEDGKIYQRAFGGQSLKFGKGGQAHRCCCVADRTGHSLLHTLYGRSLRYDTSYFVEYFALDLLMENGECRGVIALCIEDGSIHRIRAKNTVIATGGYGRTYFSCTSAHTSTGDGTAMVTRAGLPCQDLEFVQFHPTGIYGAGCLITEGCRGEGGILINSQGERFMERYAPVAKDLASRDVVSRSMTLEIREGRGCGPEKDHVYLQLHHLPPEQLATRLPGISETAMIFAGVDVTKEPIPVLPTVHYNMGGIPTNYKGQVLKHVNGQDQIVPGLYACGEAACASVHGANRLGANSLLDLVVFGRACALSIAESCRPGDKVPSIKANAGEESVMNLDKLRFADGSIRTSELRLNMQKSMQNHAAVFRVGSVLQEGCEKISQLYGDLKHLKTFDRGMVWNTDLVETLELQNLMLCALQTIYGAEARKESRGAHAREDYKVRVDEYDYSKPIQGQQKKPFGEHWRKHTLSYVDIKTGKVTLEYRPVIDKTLNEADCATVPPAIRSY</sequence>
<keyword id="KW-0007">Acetylation</keyword>
<keyword id="KW-0903">Direct protein sequencing</keyword>
<keyword id="KW-0249">Electron transport</keyword>
<keyword id="KW-0274">FAD</keyword>
<keyword id="KW-0285">Flavoprotein</keyword>
<keyword id="KW-0472">Membrane</keyword>
<keyword id="KW-0496">Mitochondrion</keyword>
<keyword id="KW-0999">Mitochondrion inner membrane</keyword>
<keyword id="KW-0560">Oxidoreductase</keyword>
<keyword id="KW-0597">Phosphoprotein</keyword>
<keyword id="KW-1185">Reference proteome</keyword>
<keyword id="KW-0809">Transit peptide</keyword>
<keyword id="KW-0813">Transport</keyword>
<keyword id="KW-0816">Tricarboxylic acid cycle</keyword>
<keyword id="KW-0043">Tumor suppressor</keyword>
<dbReference type="EC" id="1.3.5.1" evidence="2"/>
<dbReference type="EC" id="1.1.5.-" evidence="1"/>
<dbReference type="EMBL" id="AK029520">
    <property type="protein sequence ID" value="BAC26491.1"/>
    <property type="molecule type" value="mRNA"/>
</dbReference>
<dbReference type="EMBL" id="AK034928">
    <property type="protein sequence ID" value="BAC28884.1"/>
    <property type="molecule type" value="mRNA"/>
</dbReference>
<dbReference type="EMBL" id="AK049590">
    <property type="protein sequence ID" value="BAC33831.1"/>
    <property type="molecule type" value="mRNA"/>
</dbReference>
<dbReference type="EMBL" id="AK050475">
    <property type="protein sequence ID" value="BAC34276.1"/>
    <property type="molecule type" value="mRNA"/>
</dbReference>
<dbReference type="EMBL" id="AK075990">
    <property type="protein sequence ID" value="BAC36101.1"/>
    <property type="molecule type" value="mRNA"/>
</dbReference>
<dbReference type="EMBL" id="AK145923">
    <property type="protein sequence ID" value="BAE26754.1"/>
    <property type="molecule type" value="mRNA"/>
</dbReference>
<dbReference type="EMBL" id="AK147286">
    <property type="protein sequence ID" value="BAE27822.1"/>
    <property type="molecule type" value="mRNA"/>
</dbReference>
<dbReference type="EMBL" id="AK147624">
    <property type="protein sequence ID" value="BAE28032.1"/>
    <property type="molecule type" value="mRNA"/>
</dbReference>
<dbReference type="EMBL" id="AK153085">
    <property type="protein sequence ID" value="BAE31710.1"/>
    <property type="molecule type" value="mRNA"/>
</dbReference>
<dbReference type="EMBL" id="AK162148">
    <property type="protein sequence ID" value="BAE36754.1"/>
    <property type="molecule type" value="mRNA"/>
</dbReference>
<dbReference type="EMBL" id="AK169254">
    <property type="protein sequence ID" value="BAE41018.1"/>
    <property type="molecule type" value="mRNA"/>
</dbReference>
<dbReference type="EMBL" id="AK004362">
    <property type="protein sequence ID" value="BAE43173.1"/>
    <property type="molecule type" value="mRNA"/>
</dbReference>
<dbReference type="EMBL" id="BC011301">
    <property type="protein sequence ID" value="AAH11301.1"/>
    <property type="molecule type" value="mRNA"/>
</dbReference>
<dbReference type="EMBL" id="BC031849">
    <property type="protein sequence ID" value="AAH31849.1"/>
    <property type="molecule type" value="mRNA"/>
</dbReference>
<dbReference type="EMBL" id="DQ402975">
    <property type="protein sequence ID" value="ABD77308.1"/>
    <property type="molecule type" value="mRNA"/>
</dbReference>
<dbReference type="EMBL" id="AF095938">
    <property type="protein sequence ID" value="AAC72373.1"/>
    <property type="molecule type" value="mRNA"/>
</dbReference>
<dbReference type="CCDS" id="CCDS26643.1"/>
<dbReference type="RefSeq" id="NP_075770.1">
    <property type="nucleotide sequence ID" value="NM_023281.1"/>
</dbReference>
<dbReference type="SMR" id="Q8K2B3"/>
<dbReference type="BioGRID" id="211828">
    <property type="interactions" value="91"/>
</dbReference>
<dbReference type="ComplexPortal" id="CPX-562">
    <property type="entry name" value="Mitochondrial respiratory chain complex II"/>
</dbReference>
<dbReference type="CORUM" id="Q8K2B3"/>
<dbReference type="FunCoup" id="Q8K2B3">
    <property type="interactions" value="1523"/>
</dbReference>
<dbReference type="IntAct" id="Q8K2B3">
    <property type="interactions" value="22"/>
</dbReference>
<dbReference type="MINT" id="Q8K2B3"/>
<dbReference type="STRING" id="10090.ENSMUSP00000022062"/>
<dbReference type="CarbonylDB" id="Q8K2B3"/>
<dbReference type="GlyGen" id="Q8K2B3">
    <property type="glycosylation" value="1 site, 1 O-linked glycan (1 site)"/>
</dbReference>
<dbReference type="iPTMnet" id="Q8K2B3"/>
<dbReference type="MetOSite" id="Q8K2B3"/>
<dbReference type="PhosphoSitePlus" id="Q8K2B3"/>
<dbReference type="SwissPalm" id="Q8K2B3"/>
<dbReference type="REPRODUCTION-2DPAGE" id="Q8K2B3"/>
<dbReference type="jPOST" id="Q8K2B3"/>
<dbReference type="PaxDb" id="10090-ENSMUSP00000022062"/>
<dbReference type="PeptideAtlas" id="Q8K2B3"/>
<dbReference type="ProteomicsDB" id="255377"/>
<dbReference type="Pumba" id="Q8K2B3"/>
<dbReference type="DNASU" id="66945"/>
<dbReference type="Ensembl" id="ENSMUST00000022062.8">
    <property type="protein sequence ID" value="ENSMUSP00000022062.8"/>
    <property type="gene ID" value="ENSMUSG00000021577.15"/>
</dbReference>
<dbReference type="GeneID" id="66945"/>
<dbReference type="KEGG" id="mmu:66945"/>
<dbReference type="UCSC" id="uc007rfa.1">
    <property type="organism name" value="mouse"/>
</dbReference>
<dbReference type="AGR" id="MGI:1914195"/>
<dbReference type="CTD" id="6389"/>
<dbReference type="MGI" id="MGI:1914195">
    <property type="gene designation" value="Sdha"/>
</dbReference>
<dbReference type="VEuPathDB" id="HostDB:ENSMUSG00000021577"/>
<dbReference type="eggNOG" id="KOG2403">
    <property type="taxonomic scope" value="Eukaryota"/>
</dbReference>
<dbReference type="GeneTree" id="ENSGT00910000144277"/>
<dbReference type="HOGENOM" id="CLU_014312_6_1_1"/>
<dbReference type="InParanoid" id="Q8K2B3"/>
<dbReference type="OMA" id="PTGIWRM"/>
<dbReference type="OrthoDB" id="71672at2759"/>
<dbReference type="PhylomeDB" id="Q8K2B3"/>
<dbReference type="TreeFam" id="TF300763"/>
<dbReference type="Reactome" id="R-MMU-71403">
    <property type="pathway name" value="Citric acid cycle (TCA cycle)"/>
</dbReference>
<dbReference type="Reactome" id="R-MMU-9854311">
    <property type="pathway name" value="Maturation of TCA enzymes and regulation of TCA cycle"/>
</dbReference>
<dbReference type="UniPathway" id="UPA00223">
    <property type="reaction ID" value="UER01006"/>
</dbReference>
<dbReference type="BioGRID-ORCS" id="66945">
    <property type="hits" value="18 hits in 80 CRISPR screens"/>
</dbReference>
<dbReference type="ChiTaRS" id="Sdha">
    <property type="organism name" value="mouse"/>
</dbReference>
<dbReference type="PRO" id="PR:Q8K2B3"/>
<dbReference type="Proteomes" id="UP000000589">
    <property type="component" value="Chromosome 13"/>
</dbReference>
<dbReference type="RNAct" id="Q8K2B3">
    <property type="molecule type" value="protein"/>
</dbReference>
<dbReference type="Bgee" id="ENSMUSG00000021577">
    <property type="expression patterns" value="Expressed in heart right ventricle and 273 other cell types or tissues"/>
</dbReference>
<dbReference type="ExpressionAtlas" id="Q8K2B3">
    <property type="expression patterns" value="baseline and differential"/>
</dbReference>
<dbReference type="GO" id="GO:0005743">
    <property type="term" value="C:mitochondrial inner membrane"/>
    <property type="evidence" value="ECO:0007005"/>
    <property type="project" value="MGI"/>
</dbReference>
<dbReference type="GO" id="GO:0005739">
    <property type="term" value="C:mitochondrion"/>
    <property type="evidence" value="ECO:0000314"/>
    <property type="project" value="MGI"/>
</dbReference>
<dbReference type="GO" id="GO:0043209">
    <property type="term" value="C:myelin sheath"/>
    <property type="evidence" value="ECO:0007005"/>
    <property type="project" value="UniProtKB"/>
</dbReference>
<dbReference type="GO" id="GO:0005730">
    <property type="term" value="C:nucleolus"/>
    <property type="evidence" value="ECO:0007669"/>
    <property type="project" value="Ensembl"/>
</dbReference>
<dbReference type="GO" id="GO:0045273">
    <property type="term" value="C:respiratory chain complex II (succinate dehydrogenase)"/>
    <property type="evidence" value="ECO:0000250"/>
    <property type="project" value="UniProtKB"/>
</dbReference>
<dbReference type="GO" id="GO:0050660">
    <property type="term" value="F:flavin adenine dinucleotide binding"/>
    <property type="evidence" value="ECO:0007669"/>
    <property type="project" value="InterPro"/>
</dbReference>
<dbReference type="GO" id="GO:0008177">
    <property type="term" value="F:succinate dehydrogenase (quinone) activity"/>
    <property type="evidence" value="ECO:0000250"/>
    <property type="project" value="UniProtKB"/>
</dbReference>
<dbReference type="GO" id="GO:0006121">
    <property type="term" value="P:mitochondrial electron transport, succinate to ubiquinone"/>
    <property type="evidence" value="ECO:0000303"/>
    <property type="project" value="ComplexPortal"/>
</dbReference>
<dbReference type="GO" id="GO:0007399">
    <property type="term" value="P:nervous system development"/>
    <property type="evidence" value="ECO:0007669"/>
    <property type="project" value="Ensembl"/>
</dbReference>
<dbReference type="GO" id="GO:0042776">
    <property type="term" value="P:proton motive force-driven mitochondrial ATP synthesis"/>
    <property type="evidence" value="ECO:0000303"/>
    <property type="project" value="ComplexPortal"/>
</dbReference>
<dbReference type="GO" id="GO:0022904">
    <property type="term" value="P:respiratory electron transport chain"/>
    <property type="evidence" value="ECO:0000250"/>
    <property type="project" value="UniProtKB"/>
</dbReference>
<dbReference type="GO" id="GO:0006105">
    <property type="term" value="P:succinate metabolic process"/>
    <property type="evidence" value="ECO:0000250"/>
    <property type="project" value="UniProtKB"/>
</dbReference>
<dbReference type="GO" id="GO:0006099">
    <property type="term" value="P:tricarboxylic acid cycle"/>
    <property type="evidence" value="ECO:0000303"/>
    <property type="project" value="ComplexPortal"/>
</dbReference>
<dbReference type="FunFam" id="3.90.700.10:FF:000001">
    <property type="entry name" value="Mitochondrial succinate dehydrogenase flavoprotein subunit"/>
    <property type="match status" value="1"/>
</dbReference>
<dbReference type="FunFam" id="4.10.80.40:FF:000004">
    <property type="entry name" value="Succinate dehydrogenase [ubiquinone] flavoprotein subunit, mitochondrial"/>
    <property type="match status" value="1"/>
</dbReference>
<dbReference type="FunFam" id="3.50.50.60:FF:000482">
    <property type="entry name" value="Succinate dehydrogenase complex, subunit A, flavoprotein (Fp)"/>
    <property type="match status" value="1"/>
</dbReference>
<dbReference type="FunFam" id="3.50.50.60:FF:001062">
    <property type="entry name" value="Succinate dehydrogenase complex, subunit A, flavoprotein (Fp)"/>
    <property type="match status" value="1"/>
</dbReference>
<dbReference type="FunFam" id="1.20.58.100:FF:000001">
    <property type="entry name" value="Succinate dehydrogenase flavoprotein subunit (SdhA)"/>
    <property type="match status" value="1"/>
</dbReference>
<dbReference type="Gene3D" id="3.50.50.60">
    <property type="entry name" value="FAD/NAD(P)-binding domain"/>
    <property type="match status" value="1"/>
</dbReference>
<dbReference type="Gene3D" id="1.20.58.100">
    <property type="entry name" value="Fumarate reductase/succinate dehydrogenase flavoprotein-like, C-terminal domain"/>
    <property type="match status" value="1"/>
</dbReference>
<dbReference type="Gene3D" id="4.10.80.40">
    <property type="entry name" value="succinate dehydrogenase protein domain"/>
    <property type="match status" value="1"/>
</dbReference>
<dbReference type="Gene3D" id="3.90.700.10">
    <property type="entry name" value="Succinate dehydrogenase/fumarate reductase flavoprotein, catalytic domain"/>
    <property type="match status" value="1"/>
</dbReference>
<dbReference type="InterPro" id="IPR003953">
    <property type="entry name" value="FAD-dep_OxRdtase_2_FAD-bd"/>
</dbReference>
<dbReference type="InterPro" id="IPR036188">
    <property type="entry name" value="FAD/NAD-bd_sf"/>
</dbReference>
<dbReference type="InterPro" id="IPR003952">
    <property type="entry name" value="FRD_SDH_FAD_BS"/>
</dbReference>
<dbReference type="InterPro" id="IPR037099">
    <property type="entry name" value="Fum_R/Succ_DH_flav-like_C_sf"/>
</dbReference>
<dbReference type="InterPro" id="IPR015939">
    <property type="entry name" value="Fum_Rdtase/Succ_DH_flav-like_C"/>
</dbReference>
<dbReference type="InterPro" id="IPR030664">
    <property type="entry name" value="SdhA/FrdA/AprA"/>
</dbReference>
<dbReference type="InterPro" id="IPR027477">
    <property type="entry name" value="Succ_DH/fumarate_Rdtase_cat_sf"/>
</dbReference>
<dbReference type="InterPro" id="IPR011281">
    <property type="entry name" value="Succ_DH_flav_su_fwd"/>
</dbReference>
<dbReference type="InterPro" id="IPR014006">
    <property type="entry name" value="Succ_Dhase_FrdA_Gneg"/>
</dbReference>
<dbReference type="NCBIfam" id="TIGR01816">
    <property type="entry name" value="sdhA_forward"/>
    <property type="match status" value="1"/>
</dbReference>
<dbReference type="NCBIfam" id="TIGR01812">
    <property type="entry name" value="sdhA_frdA_Gneg"/>
    <property type="match status" value="1"/>
</dbReference>
<dbReference type="PANTHER" id="PTHR11632">
    <property type="entry name" value="SUCCINATE DEHYDROGENASE 2 FLAVOPROTEIN SUBUNIT"/>
    <property type="match status" value="1"/>
</dbReference>
<dbReference type="PANTHER" id="PTHR11632:SF51">
    <property type="entry name" value="SUCCINATE DEHYDROGENASE [UBIQUINONE] FLAVOPROTEIN SUBUNIT, MITOCHONDRIAL"/>
    <property type="match status" value="1"/>
</dbReference>
<dbReference type="Pfam" id="PF00890">
    <property type="entry name" value="FAD_binding_2"/>
    <property type="match status" value="1"/>
</dbReference>
<dbReference type="Pfam" id="PF02910">
    <property type="entry name" value="Succ_DH_flav_C"/>
    <property type="match status" value="1"/>
</dbReference>
<dbReference type="PIRSF" id="PIRSF000171">
    <property type="entry name" value="SDHA_APRA_LASPO"/>
    <property type="match status" value="1"/>
</dbReference>
<dbReference type="SUPFAM" id="SSF51905">
    <property type="entry name" value="FAD/NAD(P)-binding domain"/>
    <property type="match status" value="1"/>
</dbReference>
<dbReference type="SUPFAM" id="SSF46977">
    <property type="entry name" value="Succinate dehydrogenase/fumarate reductase flavoprotein C-terminal domain"/>
    <property type="match status" value="1"/>
</dbReference>
<dbReference type="SUPFAM" id="SSF56425">
    <property type="entry name" value="Succinate dehydrogenase/fumarate reductase flavoprotein, catalytic domain"/>
    <property type="match status" value="1"/>
</dbReference>
<dbReference type="PROSITE" id="PS00504">
    <property type="entry name" value="FRD_SDH_FAD_BINDING"/>
    <property type="match status" value="1"/>
</dbReference>
<accession>Q8K2B3</accession>
<accession>Q0QF19</accession>
<accession>Q3UH25</accession>
<accession>Q3UKP7</accession>
<accession>Q3V4B1</accession>
<accession>Q921P5</accession>
<accession>Q9Z1Z4</accession>
<gene>
    <name type="primary">Sdha</name>
</gene>
<organism>
    <name type="scientific">Mus musculus</name>
    <name type="common">Mouse</name>
    <dbReference type="NCBI Taxonomy" id="10090"/>
    <lineage>
        <taxon>Eukaryota</taxon>
        <taxon>Metazoa</taxon>
        <taxon>Chordata</taxon>
        <taxon>Craniata</taxon>
        <taxon>Vertebrata</taxon>
        <taxon>Euteleostomi</taxon>
        <taxon>Mammalia</taxon>
        <taxon>Eutheria</taxon>
        <taxon>Euarchontoglires</taxon>
        <taxon>Glires</taxon>
        <taxon>Rodentia</taxon>
        <taxon>Myomorpha</taxon>
        <taxon>Muroidea</taxon>
        <taxon>Muridae</taxon>
        <taxon>Murinae</taxon>
        <taxon>Mus</taxon>
        <taxon>Mus</taxon>
    </lineage>
</organism>
<comment type="function">
    <text evidence="1 2">Flavoprotein (FP) subunit of succinate dehydrogenase (SDH) that is involved in complex II of the mitochondrial electron transport chain and is responsible for transferring electrons from succinate to ubiquinone (coenzyme Q) (By similarity). SDH also oxidizes malate to the non-canonical enol form of oxaloacetate, enol-oxaloacetate. Enol-oxaloacetate, which is a potent inhibitor of the succinate dehydrogenase activity, is further isomerized into keto-oxaloacetate (By similarity). Can act as a tumor suppressor (By similarity).</text>
</comment>
<comment type="catalytic activity">
    <reaction evidence="2">
        <text>a ubiquinone + succinate = a ubiquinol + fumarate</text>
        <dbReference type="Rhea" id="RHEA:13713"/>
        <dbReference type="Rhea" id="RHEA-COMP:9565"/>
        <dbReference type="Rhea" id="RHEA-COMP:9566"/>
        <dbReference type="ChEBI" id="CHEBI:16389"/>
        <dbReference type="ChEBI" id="CHEBI:17976"/>
        <dbReference type="ChEBI" id="CHEBI:29806"/>
        <dbReference type="ChEBI" id="CHEBI:30031"/>
        <dbReference type="EC" id="1.3.5.1"/>
    </reaction>
</comment>
<comment type="catalytic activity">
    <reaction evidence="1">
        <text>(R)-malate + a quinone = enol-oxaloacetate + a quinol</text>
        <dbReference type="Rhea" id="RHEA:79827"/>
        <dbReference type="ChEBI" id="CHEBI:15588"/>
        <dbReference type="ChEBI" id="CHEBI:17479"/>
        <dbReference type="ChEBI" id="CHEBI:24646"/>
        <dbReference type="ChEBI" id="CHEBI:132124"/>
    </reaction>
    <physiologicalReaction direction="left-to-right" evidence="1">
        <dbReference type="Rhea" id="RHEA:79828"/>
    </physiologicalReaction>
</comment>
<comment type="catalytic activity">
    <reaction evidence="1">
        <text>(S)-malate + a quinone = enol-oxaloacetate + a quinol</text>
        <dbReference type="Rhea" id="RHEA:79831"/>
        <dbReference type="ChEBI" id="CHEBI:15589"/>
        <dbReference type="ChEBI" id="CHEBI:17479"/>
        <dbReference type="ChEBI" id="CHEBI:24646"/>
        <dbReference type="ChEBI" id="CHEBI:132124"/>
    </reaction>
    <physiologicalReaction direction="left-to-right" evidence="1">
        <dbReference type="Rhea" id="RHEA:79832"/>
    </physiologicalReaction>
</comment>
<comment type="cofactor">
    <cofactor evidence="3">
        <name>FAD</name>
        <dbReference type="ChEBI" id="CHEBI:57692"/>
    </cofactor>
</comment>
<comment type="activity regulation">
    <text evidence="1">Enol-oxaloacetate inhibits the succinate dehydrogenase activity.</text>
</comment>
<comment type="pathway">
    <text evidence="2">Carbohydrate metabolism; tricarboxylic acid cycle; fumarate from succinate (eukaryal route): step 1/1.</text>
</comment>
<comment type="subunit">
    <text evidence="2 3">Component of complex II composed of four subunits: the flavoprotein (FP) SDHA, iron-sulfur protein (IP) SDHB, and a cytochrome b560 composed of SDHC and SDHD (By similarity). Interacts with SDHAF2/SDH5; interaction is required for FAD attachment (By similarity). Interacts with TRAP1 (By similarity). Interacts with LACC1 (By similarity).</text>
</comment>
<comment type="subcellular location">
    <subcellularLocation>
        <location evidence="3">Mitochondrion inner membrane</location>
        <topology evidence="3">Peripheral membrane protein</topology>
        <orientation evidence="3">Matrix side</orientation>
    </subcellularLocation>
</comment>
<comment type="PTM">
    <text evidence="5">Acetylation of Lys-498 and Lys-538 is observed in liver mitochondria from fasted mice but not from fed mice. Deacetylated by SIRT3.</text>
</comment>
<comment type="PTM">
    <text evidence="2">Phosphorylation at Tyr-215 is important for efficient electron transfer in complex II and the prevention of ROS generation.</text>
</comment>
<comment type="similarity">
    <text evidence="6">Belongs to the FAD-dependent oxidoreductase 2 family. FRD/SDH subfamily.</text>
</comment>
<protein>
    <recommendedName>
        <fullName>Succinate dehydrogenase [ubiquinone] flavoprotein subunit, mitochondrial</fullName>
        <ecNumber evidence="2">1.3.5.1</ecNumber>
    </recommendedName>
    <alternativeName>
        <fullName>Flavoprotein subunit of complex II</fullName>
        <shortName>Fp</shortName>
    </alternativeName>
    <alternativeName>
        <fullName>Malate dehydrogenase [quinone] flavoprotein subunit</fullName>
        <ecNumber evidence="1">1.1.5.-</ecNumber>
    </alternativeName>
</protein>
<feature type="transit peptide" description="Mitochondrion" evidence="3">
    <location>
        <begin position="1"/>
        <end position="42"/>
    </location>
</feature>
<feature type="chain" id="PRO_0000010337" description="Succinate dehydrogenase [ubiquinone] flavoprotein subunit, mitochondrial">
    <location>
        <begin position="43"/>
        <end position="664"/>
    </location>
</feature>
<feature type="active site" description="Proton acceptor" evidence="4">
    <location>
        <position position="340"/>
    </location>
</feature>
<feature type="binding site" evidence="2">
    <location>
        <position position="69"/>
    </location>
    <ligand>
        <name>FAD</name>
        <dbReference type="ChEBI" id="CHEBI:57692"/>
    </ligand>
</feature>
<feature type="binding site" evidence="2">
    <location>
        <position position="72"/>
    </location>
    <ligand>
        <name>FAD</name>
        <dbReference type="ChEBI" id="CHEBI:57692"/>
    </ligand>
</feature>
<feature type="binding site" evidence="2">
    <location>
        <position position="91"/>
    </location>
    <ligand>
        <name>FAD</name>
        <dbReference type="ChEBI" id="CHEBI:57692"/>
    </ligand>
</feature>
<feature type="binding site" evidence="2">
    <location>
        <position position="92"/>
    </location>
    <ligand>
        <name>FAD</name>
        <dbReference type="ChEBI" id="CHEBI:57692"/>
    </ligand>
</feature>
<feature type="binding site" evidence="2">
    <location>
        <position position="98"/>
    </location>
    <ligand>
        <name>FAD</name>
        <dbReference type="ChEBI" id="CHEBI:57692"/>
    </ligand>
</feature>
<feature type="binding site" evidence="2">
    <location>
        <position position="100"/>
    </location>
    <ligand>
        <name>FAD</name>
        <dbReference type="ChEBI" id="CHEBI:57692"/>
    </ligand>
</feature>
<feature type="binding site" evidence="2">
    <location>
        <position position="105"/>
    </location>
    <ligand>
        <name>FAD</name>
        <dbReference type="ChEBI" id="CHEBI:57692"/>
    </ligand>
</feature>
<feature type="binding site" evidence="2">
    <location>
        <position position="221"/>
    </location>
    <ligand>
        <name>FAD</name>
        <dbReference type="ChEBI" id="CHEBI:57692"/>
    </ligand>
</feature>
<feature type="binding site" evidence="2">
    <location>
        <position position="275"/>
    </location>
    <ligand>
        <name>FAD</name>
        <dbReference type="ChEBI" id="CHEBI:57692"/>
    </ligand>
</feature>
<feature type="binding site" evidence="2">
    <location>
        <position position="296"/>
    </location>
    <ligand>
        <name>oxaloacetate</name>
        <dbReference type="ChEBI" id="CHEBI:16452"/>
    </ligand>
</feature>
<feature type="binding site" evidence="2">
    <location>
        <position position="340"/>
    </location>
    <ligand>
        <name>oxaloacetate</name>
        <dbReference type="ChEBI" id="CHEBI:16452"/>
    </ligand>
</feature>
<feature type="binding site" evidence="2">
    <location>
        <position position="407"/>
    </location>
    <ligand>
        <name>oxaloacetate</name>
        <dbReference type="ChEBI" id="CHEBI:16452"/>
    </ligand>
</feature>
<feature type="binding site" evidence="2">
    <location>
        <position position="440"/>
    </location>
    <ligand>
        <name>FAD</name>
        <dbReference type="ChEBI" id="CHEBI:57692"/>
    </ligand>
</feature>
<feature type="binding site" evidence="2">
    <location>
        <position position="451"/>
    </location>
    <ligand>
        <name>oxaloacetate</name>
        <dbReference type="ChEBI" id="CHEBI:16452"/>
    </ligand>
</feature>
<feature type="binding site" evidence="2">
    <location>
        <position position="454"/>
    </location>
    <ligand>
        <name>oxaloacetate</name>
        <dbReference type="ChEBI" id="CHEBI:16452"/>
    </ligand>
</feature>
<feature type="binding site" evidence="2">
    <location>
        <position position="456"/>
    </location>
    <ligand>
        <name>FAD</name>
        <dbReference type="ChEBI" id="CHEBI:57692"/>
    </ligand>
</feature>
<feature type="binding site" evidence="2">
    <location>
        <position position="457"/>
    </location>
    <ligand>
        <name>FAD</name>
        <dbReference type="ChEBI" id="CHEBI:57692"/>
    </ligand>
</feature>
<feature type="modified residue" description="Tele-8alpha-FAD histidine" evidence="3">
    <location>
        <position position="99"/>
    </location>
</feature>
<feature type="modified residue" description="N6-acetyllysine" evidence="7">
    <location>
        <position position="167"/>
    </location>
</feature>
<feature type="modified residue" description="N6-acetyllysine; alternate" evidence="5 7 8">
    <location>
        <position position="179"/>
    </location>
</feature>
<feature type="modified residue" description="N6-succinyllysine; alternate" evidence="8">
    <location>
        <position position="179"/>
    </location>
</feature>
<feature type="modified residue" description="N6-acetyllysine" evidence="5 7">
    <location>
        <position position="182"/>
    </location>
</feature>
<feature type="modified residue" description="Phosphotyrosine; by SRC" evidence="2">
    <location>
        <position position="215"/>
    </location>
</feature>
<feature type="modified residue" description="N6-acetyllysine; alternate" evidence="5">
    <location>
        <position position="250"/>
    </location>
</feature>
<feature type="modified residue" description="N6-succinyllysine; alternate" evidence="8">
    <location>
        <position position="250"/>
    </location>
</feature>
<feature type="modified residue" description="N6-acetyllysine; alternate" evidence="5 7">
    <location>
        <position position="335"/>
    </location>
</feature>
<feature type="modified residue" description="N6-succinyllysine; alternate" evidence="8">
    <location>
        <position position="335"/>
    </location>
</feature>
<feature type="modified residue" description="N6-acetyllysine" evidence="7">
    <location>
        <position position="423"/>
    </location>
</feature>
<feature type="modified residue" description="N6-acetyllysine" evidence="5">
    <location>
        <position position="480"/>
    </location>
</feature>
<feature type="modified residue" description="N6-acetyllysine; alternate" evidence="5">
    <location>
        <position position="485"/>
    </location>
</feature>
<feature type="modified residue" description="N6-succinyllysine; alternate" evidence="8">
    <location>
        <position position="485"/>
    </location>
</feature>
<feature type="modified residue" description="N6-acetyllysine; alternate" evidence="5 7">
    <location>
        <position position="498"/>
    </location>
</feature>
<feature type="modified residue" description="N6-succinyllysine; alternate" evidence="8">
    <location>
        <position position="498"/>
    </location>
</feature>
<feature type="modified residue" description="N6-acetyllysine" evidence="7">
    <location>
        <position position="517"/>
    </location>
</feature>
<feature type="modified residue" description="N6-acetyllysine; alternate" evidence="7">
    <location>
        <position position="538"/>
    </location>
</feature>
<feature type="modified residue" description="N6-succinyllysine; alternate" evidence="8">
    <location>
        <position position="538"/>
    </location>
</feature>
<feature type="modified residue" description="N6-acetyllysine; alternate" evidence="5 7 8">
    <location>
        <position position="547"/>
    </location>
</feature>
<feature type="modified residue" description="N6-succinyllysine; alternate" evidence="8">
    <location>
        <position position="547"/>
    </location>
</feature>
<feature type="modified residue" description="N6-acetyllysine" evidence="5">
    <location>
        <position position="550"/>
    </location>
</feature>
<feature type="modified residue" description="N6-acetyllysine" evidence="5">
    <location>
        <position position="598"/>
    </location>
</feature>
<feature type="modified residue" description="N6-acetyllysine" evidence="5 7">
    <location>
        <position position="608"/>
    </location>
</feature>
<feature type="modified residue" description="N6-succinyllysine" evidence="8">
    <location>
        <position position="615"/>
    </location>
</feature>
<feature type="modified residue" description="N6-acetyllysine" evidence="5">
    <location>
        <position position="624"/>
    </location>
</feature>
<feature type="modified residue" description="N6-acetyllysine" evidence="5">
    <location>
        <position position="633"/>
    </location>
</feature>
<feature type="modified residue" description="N6-acetyllysine" evidence="7">
    <location>
        <position position="636"/>
    </location>
</feature>
<feature type="modified residue" description="N6-acetyllysine" evidence="7">
    <location>
        <position position="647"/>
    </location>
</feature>
<feature type="sequence conflict" description="In Ref. 1; BAE26754." evidence="6" ref="1">
    <original>A</original>
    <variation>V</variation>
    <location>
        <position position="69"/>
    </location>
</feature>
<feature type="sequence conflict" description="In Ref. 1; BAE26754." evidence="6" ref="1">
    <original>R</original>
    <variation>Q</variation>
    <location>
        <position position="246"/>
    </location>
</feature>
<feature type="sequence conflict" description="In Ref. 1; BAE26754." evidence="6" ref="1">
    <original>Q</original>
    <variation>R</variation>
    <location>
        <position position="428"/>
    </location>
</feature>
<feature type="sequence conflict" description="In Ref. 4; ABD77308." evidence="6" ref="4">
    <original>F</original>
    <variation>L</variation>
    <location>
        <position position="501"/>
    </location>
</feature>
<feature type="sequence conflict" description="In Ref. 4; ABD77308." evidence="6" ref="4">
    <original>K</original>
    <variation>M</variation>
    <location>
        <position position="517"/>
    </location>
</feature>
<feature type="sequence conflict" description="In Ref. 4; ABD77308." evidence="6" ref="4">
    <original>L</original>
    <variation>M</variation>
    <location>
        <position position="571"/>
    </location>
</feature>
<reference key="1">
    <citation type="journal article" date="2005" name="Science">
        <title>The transcriptional landscape of the mammalian genome.</title>
        <authorList>
            <person name="Carninci P."/>
            <person name="Kasukawa T."/>
            <person name="Katayama S."/>
            <person name="Gough J."/>
            <person name="Frith M.C."/>
            <person name="Maeda N."/>
            <person name="Oyama R."/>
            <person name="Ravasi T."/>
            <person name="Lenhard B."/>
            <person name="Wells C."/>
            <person name="Kodzius R."/>
            <person name="Shimokawa K."/>
            <person name="Bajic V.B."/>
            <person name="Brenner S.E."/>
            <person name="Batalov S."/>
            <person name="Forrest A.R."/>
            <person name="Zavolan M."/>
            <person name="Davis M.J."/>
            <person name="Wilming L.G."/>
            <person name="Aidinis V."/>
            <person name="Allen J.E."/>
            <person name="Ambesi-Impiombato A."/>
            <person name="Apweiler R."/>
            <person name="Aturaliya R.N."/>
            <person name="Bailey T.L."/>
            <person name="Bansal M."/>
            <person name="Baxter L."/>
            <person name="Beisel K.W."/>
            <person name="Bersano T."/>
            <person name="Bono H."/>
            <person name="Chalk A.M."/>
            <person name="Chiu K.P."/>
            <person name="Choudhary V."/>
            <person name="Christoffels A."/>
            <person name="Clutterbuck D.R."/>
            <person name="Crowe M.L."/>
            <person name="Dalla E."/>
            <person name="Dalrymple B.P."/>
            <person name="de Bono B."/>
            <person name="Della Gatta G."/>
            <person name="di Bernardo D."/>
            <person name="Down T."/>
            <person name="Engstrom P."/>
            <person name="Fagiolini M."/>
            <person name="Faulkner G."/>
            <person name="Fletcher C.F."/>
            <person name="Fukushima T."/>
            <person name="Furuno M."/>
            <person name="Futaki S."/>
            <person name="Gariboldi M."/>
            <person name="Georgii-Hemming P."/>
            <person name="Gingeras T.R."/>
            <person name="Gojobori T."/>
            <person name="Green R.E."/>
            <person name="Gustincich S."/>
            <person name="Harbers M."/>
            <person name="Hayashi Y."/>
            <person name="Hensch T.K."/>
            <person name="Hirokawa N."/>
            <person name="Hill D."/>
            <person name="Huminiecki L."/>
            <person name="Iacono M."/>
            <person name="Ikeo K."/>
            <person name="Iwama A."/>
            <person name="Ishikawa T."/>
            <person name="Jakt M."/>
            <person name="Kanapin A."/>
            <person name="Katoh M."/>
            <person name="Kawasawa Y."/>
            <person name="Kelso J."/>
            <person name="Kitamura H."/>
            <person name="Kitano H."/>
            <person name="Kollias G."/>
            <person name="Krishnan S.P."/>
            <person name="Kruger A."/>
            <person name="Kummerfeld S.K."/>
            <person name="Kurochkin I.V."/>
            <person name="Lareau L.F."/>
            <person name="Lazarevic D."/>
            <person name="Lipovich L."/>
            <person name="Liu J."/>
            <person name="Liuni S."/>
            <person name="McWilliam S."/>
            <person name="Madan Babu M."/>
            <person name="Madera M."/>
            <person name="Marchionni L."/>
            <person name="Matsuda H."/>
            <person name="Matsuzawa S."/>
            <person name="Miki H."/>
            <person name="Mignone F."/>
            <person name="Miyake S."/>
            <person name="Morris K."/>
            <person name="Mottagui-Tabar S."/>
            <person name="Mulder N."/>
            <person name="Nakano N."/>
            <person name="Nakauchi H."/>
            <person name="Ng P."/>
            <person name="Nilsson R."/>
            <person name="Nishiguchi S."/>
            <person name="Nishikawa S."/>
            <person name="Nori F."/>
            <person name="Ohara O."/>
            <person name="Okazaki Y."/>
            <person name="Orlando V."/>
            <person name="Pang K.C."/>
            <person name="Pavan W.J."/>
            <person name="Pavesi G."/>
            <person name="Pesole G."/>
            <person name="Petrovsky N."/>
            <person name="Piazza S."/>
            <person name="Reed J."/>
            <person name="Reid J.F."/>
            <person name="Ring B.Z."/>
            <person name="Ringwald M."/>
            <person name="Rost B."/>
            <person name="Ruan Y."/>
            <person name="Salzberg S.L."/>
            <person name="Sandelin A."/>
            <person name="Schneider C."/>
            <person name="Schoenbach C."/>
            <person name="Sekiguchi K."/>
            <person name="Semple C.A."/>
            <person name="Seno S."/>
            <person name="Sessa L."/>
            <person name="Sheng Y."/>
            <person name="Shibata Y."/>
            <person name="Shimada H."/>
            <person name="Shimada K."/>
            <person name="Silva D."/>
            <person name="Sinclair B."/>
            <person name="Sperling S."/>
            <person name="Stupka E."/>
            <person name="Sugiura K."/>
            <person name="Sultana R."/>
            <person name="Takenaka Y."/>
            <person name="Taki K."/>
            <person name="Tammoja K."/>
            <person name="Tan S.L."/>
            <person name="Tang S."/>
            <person name="Taylor M.S."/>
            <person name="Tegner J."/>
            <person name="Teichmann S.A."/>
            <person name="Ueda H.R."/>
            <person name="van Nimwegen E."/>
            <person name="Verardo R."/>
            <person name="Wei C.L."/>
            <person name="Yagi K."/>
            <person name="Yamanishi H."/>
            <person name="Zabarovsky E."/>
            <person name="Zhu S."/>
            <person name="Zimmer A."/>
            <person name="Hide W."/>
            <person name="Bult C."/>
            <person name="Grimmond S.M."/>
            <person name="Teasdale R.D."/>
            <person name="Liu E.T."/>
            <person name="Brusic V."/>
            <person name="Quackenbush J."/>
            <person name="Wahlestedt C."/>
            <person name="Mattick J.S."/>
            <person name="Hume D.A."/>
            <person name="Kai C."/>
            <person name="Sasaki D."/>
            <person name="Tomaru Y."/>
            <person name="Fukuda S."/>
            <person name="Kanamori-Katayama M."/>
            <person name="Suzuki M."/>
            <person name="Aoki J."/>
            <person name="Arakawa T."/>
            <person name="Iida J."/>
            <person name="Imamura K."/>
            <person name="Itoh M."/>
            <person name="Kato T."/>
            <person name="Kawaji H."/>
            <person name="Kawagashira N."/>
            <person name="Kawashima T."/>
            <person name="Kojima M."/>
            <person name="Kondo S."/>
            <person name="Konno H."/>
            <person name="Nakano K."/>
            <person name="Ninomiya N."/>
            <person name="Nishio T."/>
            <person name="Okada M."/>
            <person name="Plessy C."/>
            <person name="Shibata K."/>
            <person name="Shiraki T."/>
            <person name="Suzuki S."/>
            <person name="Tagami M."/>
            <person name="Waki K."/>
            <person name="Watahiki A."/>
            <person name="Okamura-Oho Y."/>
            <person name="Suzuki H."/>
            <person name="Kawai J."/>
            <person name="Hayashizaki Y."/>
        </authorList>
    </citation>
    <scope>NUCLEOTIDE SEQUENCE [LARGE SCALE MRNA]</scope>
    <source>
        <strain>C57BL/6J</strain>
        <tissue>Bone marrow</tissue>
        <tissue>Egg</tissue>
        <tissue>Heart</tissue>
        <tissue>Pancreas</tissue>
        <tissue>Testis</tissue>
    </source>
</reference>
<reference key="2">
    <citation type="journal article" date="2004" name="Genome Res.">
        <title>The status, quality, and expansion of the NIH full-length cDNA project: the Mammalian Gene Collection (MGC).</title>
        <authorList>
            <consortium name="The MGC Project Team"/>
        </authorList>
    </citation>
    <scope>NUCLEOTIDE SEQUENCE [LARGE SCALE MRNA]</scope>
    <source>
        <strain>Czech II</strain>
        <strain>FVB/N</strain>
        <tissue>Mammary gland</tissue>
        <tissue>Mammary tumor</tissue>
    </source>
</reference>
<reference key="3">
    <citation type="submission" date="2007-04" db="UniProtKB">
        <authorList>
            <person name="Lubec G."/>
            <person name="Klug S."/>
            <person name="Kang S.U."/>
        </authorList>
    </citation>
    <scope>PROTEIN SEQUENCE OF 1-14; 47-92; 121-128; 196-207; 233-246; 251-282; 313-325; 362-418; 452-480; 486-498; 528-547; 601-615; 624-633 AND 637-647</scope>
    <source>
        <strain>C57BL/6J</strain>
        <tissue>Brain</tissue>
        <tissue>Hippocampus</tissue>
    </source>
</reference>
<reference key="4">
    <citation type="journal article" date="2006" name="Mol. Biol. Evol.">
        <title>Housekeeping genes for phylogenetic analysis of eutherian relationships.</title>
        <authorList>
            <person name="Kullberg M."/>
            <person name="Nilsson M.A."/>
            <person name="Arnason U."/>
            <person name="Harley E.H."/>
            <person name="Janke A."/>
        </authorList>
    </citation>
    <scope>NUCLEOTIDE SEQUENCE [MRNA] OF 59-609</scope>
    <source>
        <tissue>Liver</tissue>
    </source>
</reference>
<reference key="5">
    <citation type="submission" date="1998-10" db="EMBL/GenBank/DDBJ databases">
        <title>OXPHOS genes in mammals and the molecular clock.</title>
        <authorList>
            <person name="Weinreich D.M."/>
        </authorList>
    </citation>
    <scope>NUCLEOTIDE SEQUENCE [MRNA] OF 74-605</scope>
    <source>
        <tissue>Heart</tissue>
    </source>
</reference>
<reference key="6">
    <citation type="journal article" date="2010" name="Cell">
        <title>A tissue-specific atlas of mouse protein phosphorylation and expression.</title>
        <authorList>
            <person name="Huttlin E.L."/>
            <person name="Jedrychowski M.P."/>
            <person name="Elias J.E."/>
            <person name="Goswami T."/>
            <person name="Rad R."/>
            <person name="Beausoleil S.A."/>
            <person name="Villen J."/>
            <person name="Haas W."/>
            <person name="Sowa M.E."/>
            <person name="Gygi S.P."/>
        </authorList>
    </citation>
    <scope>IDENTIFICATION BY MASS SPECTROMETRY [LARGE SCALE ANALYSIS]</scope>
    <source>
        <tissue>Brain</tissue>
        <tissue>Brown adipose tissue</tissue>
        <tissue>Heart</tissue>
        <tissue>Kidney</tissue>
        <tissue>Liver</tissue>
        <tissue>Lung</tissue>
        <tissue>Pancreas</tissue>
        <tissue>Spleen</tissue>
        <tissue>Testis</tissue>
    </source>
</reference>
<reference key="7">
    <citation type="journal article" date="2011" name="PLoS ONE">
        <title>Succinate dehydrogenase is a direct target of sirtuin 3 deacetylase activity.</title>
        <authorList>
            <person name="Finley L.W."/>
            <person name="Haas W."/>
            <person name="Desquiret-Dumas V."/>
            <person name="Wallace D.C."/>
            <person name="Procaccio V."/>
            <person name="Gygi S.P."/>
            <person name="Haigis M.C."/>
        </authorList>
    </citation>
    <scope>ACETYLATION AT LYS-179; LYS-182; LYS-250; LYS-335; LYS-480; LYS-485; LYS-498; LYS-547; LYS-550; LYS-598; LYS-608; LYS-624 AND LYS-633</scope>
    <scope>DEACETYLATION BY SIRT3</scope>
</reference>
<reference key="8">
    <citation type="journal article" date="2013" name="Mol. Cell">
        <title>SIRT5-mediated lysine desuccinylation impacts diverse metabolic pathways.</title>
        <authorList>
            <person name="Park J."/>
            <person name="Chen Y."/>
            <person name="Tishkoff D.X."/>
            <person name="Peng C."/>
            <person name="Tan M."/>
            <person name="Dai L."/>
            <person name="Xie Z."/>
            <person name="Zhang Y."/>
            <person name="Zwaans B.M."/>
            <person name="Skinner M.E."/>
            <person name="Lombard D.B."/>
            <person name="Zhao Y."/>
        </authorList>
    </citation>
    <scope>ACETYLATION [LARGE SCALE ANALYSIS] AT LYS-179 AND LYS-547</scope>
    <scope>SUCCINYLATION [LARGE SCALE ANALYSIS] AT LYS-179; LYS-250; LYS-335; LYS-485; LYS-498; LYS-538; LYS-547 AND LYS-615</scope>
    <scope>IDENTIFICATION BY MASS SPECTROMETRY [LARGE SCALE ANALYSIS]</scope>
    <source>
        <tissue>Embryonic fibroblast</tissue>
        <tissue>Liver</tissue>
    </source>
</reference>
<reference key="9">
    <citation type="journal article" date="2013" name="Proc. Natl. Acad. Sci. U.S.A.">
        <title>Label-free quantitative proteomics of the lysine acetylome in mitochondria identifies substrates of SIRT3 in metabolic pathways.</title>
        <authorList>
            <person name="Rardin M.J."/>
            <person name="Newman J.C."/>
            <person name="Held J.M."/>
            <person name="Cusack M.P."/>
            <person name="Sorensen D.J."/>
            <person name="Li B."/>
            <person name="Schilling B."/>
            <person name="Mooney S.D."/>
            <person name="Kahn C.R."/>
            <person name="Verdin E."/>
            <person name="Gibson B.W."/>
        </authorList>
    </citation>
    <scope>ACETYLATION [LARGE SCALE ANALYSIS] AT LYS-167; LYS-179; LYS-182; LYS-335; LYS-423; LYS-498; LYS-517; LYS-538; LYS-547; LYS-608; LYS-636 AND LYS-647</scope>
    <scope>IDENTIFICATION BY MASS SPECTROMETRY [LARGE SCALE ANALYSIS]</scope>
    <source>
        <tissue>Liver</tissue>
    </source>
</reference>